<keyword id="KW-0175">Coiled coil</keyword>
<keyword id="KW-0238">DNA-binding</keyword>
<keyword id="KW-0804">Transcription</keyword>
<keyword id="KW-0805">Transcription regulation</keyword>
<feature type="chain" id="PRO_1000034319" description="Transcription elongation factor GreA">
    <location>
        <begin position="1"/>
        <end position="156"/>
    </location>
</feature>
<feature type="coiled-coil region" evidence="1">
    <location>
        <begin position="8"/>
        <end position="75"/>
    </location>
</feature>
<name>GREA_THEM4</name>
<proteinExistence type="inferred from homology"/>
<sequence>MKKEVIYLTKEGYEKLKTELDNLKQKLMFEIAERIKEARELGDLSENSEYQEAKNEQGRIAARINELENMLSKAEVIEGLDTNVINIGNWVIIKNLETGEEKTIQIVTPHEADVFNNKISFESPIGRILVGKKVGEVVKIKAPKGVFKYQILGIKV</sequence>
<comment type="function">
    <text evidence="1">Necessary for efficient RNA polymerase transcription elongation past template-encoded arresting sites. The arresting sites in DNA have the property of trapping a certain fraction of elongating RNA polymerases that pass through, resulting in locked ternary complexes. Cleavage of the nascent transcript by cleavage factors such as GreA or GreB allows the resumption of elongation from the new 3'terminus. GreA releases sequences of 2 to 3 nucleotides.</text>
</comment>
<comment type="similarity">
    <text evidence="1">Belongs to the GreA/GreB family.</text>
</comment>
<protein>
    <recommendedName>
        <fullName evidence="1">Transcription elongation factor GreA</fullName>
    </recommendedName>
    <alternativeName>
        <fullName evidence="1">Transcript cleavage factor GreA</fullName>
    </alternativeName>
</protein>
<reference key="1">
    <citation type="submission" date="2007-05" db="EMBL/GenBank/DDBJ databases">
        <title>Complete sequence of Thermosipho melanesiensis BI429.</title>
        <authorList>
            <consortium name="US DOE Joint Genome Institute"/>
            <person name="Copeland A."/>
            <person name="Lucas S."/>
            <person name="Lapidus A."/>
            <person name="Barry K."/>
            <person name="Glavina del Rio T."/>
            <person name="Dalin E."/>
            <person name="Tice H."/>
            <person name="Pitluck S."/>
            <person name="Chertkov O."/>
            <person name="Brettin T."/>
            <person name="Bruce D."/>
            <person name="Detter J.C."/>
            <person name="Han C."/>
            <person name="Schmutz J."/>
            <person name="Larimer F."/>
            <person name="Land M."/>
            <person name="Hauser L."/>
            <person name="Kyrpides N."/>
            <person name="Mikhailova N."/>
            <person name="Nelson K."/>
            <person name="Gogarten J.P."/>
            <person name="Noll K."/>
            <person name="Richardson P."/>
        </authorList>
    </citation>
    <scope>NUCLEOTIDE SEQUENCE [LARGE SCALE GENOMIC DNA]</scope>
    <source>
        <strain>DSM 12029 / CIP 104789 / BI429</strain>
    </source>
</reference>
<gene>
    <name evidence="1" type="primary">greA</name>
    <name type="ordered locus">Tmel_1377</name>
</gene>
<accession>A6LMS3</accession>
<dbReference type="EMBL" id="CP000716">
    <property type="protein sequence ID" value="ABR31224.1"/>
    <property type="molecule type" value="Genomic_DNA"/>
</dbReference>
<dbReference type="RefSeq" id="WP_012057583.1">
    <property type="nucleotide sequence ID" value="NC_009616.1"/>
</dbReference>
<dbReference type="SMR" id="A6LMS3"/>
<dbReference type="STRING" id="391009.Tmel_1377"/>
<dbReference type="KEGG" id="tme:Tmel_1377"/>
<dbReference type="eggNOG" id="COG0782">
    <property type="taxonomic scope" value="Bacteria"/>
</dbReference>
<dbReference type="HOGENOM" id="CLU_101379_2_1_0"/>
<dbReference type="OrthoDB" id="9808774at2"/>
<dbReference type="Proteomes" id="UP000001110">
    <property type="component" value="Chromosome"/>
</dbReference>
<dbReference type="GO" id="GO:0003677">
    <property type="term" value="F:DNA binding"/>
    <property type="evidence" value="ECO:0007669"/>
    <property type="project" value="UniProtKB-UniRule"/>
</dbReference>
<dbReference type="GO" id="GO:0070063">
    <property type="term" value="F:RNA polymerase binding"/>
    <property type="evidence" value="ECO:0007669"/>
    <property type="project" value="InterPro"/>
</dbReference>
<dbReference type="GO" id="GO:0006354">
    <property type="term" value="P:DNA-templated transcription elongation"/>
    <property type="evidence" value="ECO:0007669"/>
    <property type="project" value="TreeGrafter"/>
</dbReference>
<dbReference type="GO" id="GO:0032784">
    <property type="term" value="P:regulation of DNA-templated transcription elongation"/>
    <property type="evidence" value="ECO:0007669"/>
    <property type="project" value="UniProtKB-UniRule"/>
</dbReference>
<dbReference type="FunFam" id="1.10.287.180:FF:000001">
    <property type="entry name" value="Transcription elongation factor GreA"/>
    <property type="match status" value="1"/>
</dbReference>
<dbReference type="FunFam" id="3.10.50.30:FF:000001">
    <property type="entry name" value="Transcription elongation factor GreA"/>
    <property type="match status" value="1"/>
</dbReference>
<dbReference type="Gene3D" id="3.10.50.30">
    <property type="entry name" value="Transcription elongation factor, GreA/GreB, C-terminal domain"/>
    <property type="match status" value="1"/>
</dbReference>
<dbReference type="Gene3D" id="1.10.287.180">
    <property type="entry name" value="Transcription elongation factor, GreA/GreB, N-terminal domain"/>
    <property type="match status" value="1"/>
</dbReference>
<dbReference type="HAMAP" id="MF_00105">
    <property type="entry name" value="GreA_GreB"/>
    <property type="match status" value="1"/>
</dbReference>
<dbReference type="InterPro" id="IPR036953">
    <property type="entry name" value="GreA/GreB_C_sf"/>
</dbReference>
<dbReference type="InterPro" id="IPR018151">
    <property type="entry name" value="TF_GreA/GreB_CS"/>
</dbReference>
<dbReference type="InterPro" id="IPR006359">
    <property type="entry name" value="Tscrpt_elong_fac_GreA"/>
</dbReference>
<dbReference type="InterPro" id="IPR028624">
    <property type="entry name" value="Tscrpt_elong_fac_GreA/B"/>
</dbReference>
<dbReference type="InterPro" id="IPR001437">
    <property type="entry name" value="Tscrpt_elong_fac_GreA/B_C"/>
</dbReference>
<dbReference type="InterPro" id="IPR023459">
    <property type="entry name" value="Tscrpt_elong_fac_GreA/B_fam"/>
</dbReference>
<dbReference type="InterPro" id="IPR022691">
    <property type="entry name" value="Tscrpt_elong_fac_GreA/B_N"/>
</dbReference>
<dbReference type="InterPro" id="IPR036805">
    <property type="entry name" value="Tscrpt_elong_fac_GreA/B_N_sf"/>
</dbReference>
<dbReference type="NCBIfam" id="TIGR01462">
    <property type="entry name" value="greA"/>
    <property type="match status" value="1"/>
</dbReference>
<dbReference type="NCBIfam" id="NF001263">
    <property type="entry name" value="PRK00226.1-4"/>
    <property type="match status" value="1"/>
</dbReference>
<dbReference type="PANTHER" id="PTHR30437">
    <property type="entry name" value="TRANSCRIPTION ELONGATION FACTOR GREA"/>
    <property type="match status" value="1"/>
</dbReference>
<dbReference type="PANTHER" id="PTHR30437:SF4">
    <property type="entry name" value="TRANSCRIPTION ELONGATION FACTOR GREA"/>
    <property type="match status" value="1"/>
</dbReference>
<dbReference type="Pfam" id="PF01272">
    <property type="entry name" value="GreA_GreB"/>
    <property type="match status" value="1"/>
</dbReference>
<dbReference type="Pfam" id="PF03449">
    <property type="entry name" value="GreA_GreB_N"/>
    <property type="match status" value="1"/>
</dbReference>
<dbReference type="PIRSF" id="PIRSF006092">
    <property type="entry name" value="GreA_GreB"/>
    <property type="match status" value="1"/>
</dbReference>
<dbReference type="SUPFAM" id="SSF54534">
    <property type="entry name" value="FKBP-like"/>
    <property type="match status" value="1"/>
</dbReference>
<dbReference type="SUPFAM" id="SSF46557">
    <property type="entry name" value="GreA transcript cleavage protein, N-terminal domain"/>
    <property type="match status" value="1"/>
</dbReference>
<dbReference type="PROSITE" id="PS00829">
    <property type="entry name" value="GREAB_1"/>
    <property type="match status" value="1"/>
</dbReference>
<evidence type="ECO:0000255" key="1">
    <source>
        <dbReference type="HAMAP-Rule" id="MF_00105"/>
    </source>
</evidence>
<organism>
    <name type="scientific">Thermosipho melanesiensis (strain DSM 12029 / CIP 104789 / BI429)</name>
    <dbReference type="NCBI Taxonomy" id="391009"/>
    <lineage>
        <taxon>Bacteria</taxon>
        <taxon>Thermotogati</taxon>
        <taxon>Thermotogota</taxon>
        <taxon>Thermotogae</taxon>
        <taxon>Thermotogales</taxon>
        <taxon>Fervidobacteriaceae</taxon>
        <taxon>Thermosipho</taxon>
    </lineage>
</organism>